<sequence>MTTIVSVRRNNQVVIAGDGQVSLGNTVMKGNARKVRRLYHNKVLAGFAGGTADAFTLFERFESKLEMHQGHLMRAAVEMAKDWRSDRVLRKLEALLAVADTECSLIITGNGDVVQPENDLIAIGSGGNFAQAAATALLENTDLSAKEIAEKSLTIAGDICVFTNQFKTIEELNY</sequence>
<keyword id="KW-0021">Allosteric enzyme</keyword>
<keyword id="KW-0963">Cytoplasm</keyword>
<keyword id="KW-0378">Hydrolase</keyword>
<keyword id="KW-0479">Metal-binding</keyword>
<keyword id="KW-0645">Protease</keyword>
<keyword id="KW-1185">Reference proteome</keyword>
<keyword id="KW-0915">Sodium</keyword>
<keyword id="KW-0888">Threonine protease</keyword>
<proteinExistence type="inferred from homology"/>
<evidence type="ECO:0000255" key="1">
    <source>
        <dbReference type="HAMAP-Rule" id="MF_00248"/>
    </source>
</evidence>
<dbReference type="EC" id="3.4.25.2" evidence="1"/>
<dbReference type="EMBL" id="CP000606">
    <property type="protein sequence ID" value="ABO22247.1"/>
    <property type="molecule type" value="Genomic_DNA"/>
</dbReference>
<dbReference type="RefSeq" id="WP_011864181.1">
    <property type="nucleotide sequence ID" value="NC_009092.1"/>
</dbReference>
<dbReference type="SMR" id="A3Q9U9"/>
<dbReference type="STRING" id="323850.Shew_0375"/>
<dbReference type="MEROPS" id="T01.006"/>
<dbReference type="KEGG" id="slo:Shew_0375"/>
<dbReference type="eggNOG" id="COG5405">
    <property type="taxonomic scope" value="Bacteria"/>
</dbReference>
<dbReference type="HOGENOM" id="CLU_093872_1_0_6"/>
<dbReference type="OrthoDB" id="9804884at2"/>
<dbReference type="Proteomes" id="UP000001558">
    <property type="component" value="Chromosome"/>
</dbReference>
<dbReference type="GO" id="GO:0009376">
    <property type="term" value="C:HslUV protease complex"/>
    <property type="evidence" value="ECO:0007669"/>
    <property type="project" value="UniProtKB-UniRule"/>
</dbReference>
<dbReference type="GO" id="GO:0005839">
    <property type="term" value="C:proteasome core complex"/>
    <property type="evidence" value="ECO:0007669"/>
    <property type="project" value="InterPro"/>
</dbReference>
<dbReference type="GO" id="GO:0046872">
    <property type="term" value="F:metal ion binding"/>
    <property type="evidence" value="ECO:0007669"/>
    <property type="project" value="UniProtKB-KW"/>
</dbReference>
<dbReference type="GO" id="GO:0004298">
    <property type="term" value="F:threonine-type endopeptidase activity"/>
    <property type="evidence" value="ECO:0007669"/>
    <property type="project" value="UniProtKB-KW"/>
</dbReference>
<dbReference type="GO" id="GO:0051603">
    <property type="term" value="P:proteolysis involved in protein catabolic process"/>
    <property type="evidence" value="ECO:0007669"/>
    <property type="project" value="InterPro"/>
</dbReference>
<dbReference type="CDD" id="cd01913">
    <property type="entry name" value="protease_HslV"/>
    <property type="match status" value="1"/>
</dbReference>
<dbReference type="FunFam" id="3.60.20.10:FF:000002">
    <property type="entry name" value="ATP-dependent protease subunit HslV"/>
    <property type="match status" value="1"/>
</dbReference>
<dbReference type="Gene3D" id="3.60.20.10">
    <property type="entry name" value="Glutamine Phosphoribosylpyrophosphate, subunit 1, domain 1"/>
    <property type="match status" value="1"/>
</dbReference>
<dbReference type="HAMAP" id="MF_00248">
    <property type="entry name" value="HslV"/>
    <property type="match status" value="1"/>
</dbReference>
<dbReference type="InterPro" id="IPR022281">
    <property type="entry name" value="ATP-dep_Prtase_HsIV_su"/>
</dbReference>
<dbReference type="InterPro" id="IPR029055">
    <property type="entry name" value="Ntn_hydrolases_N"/>
</dbReference>
<dbReference type="InterPro" id="IPR001353">
    <property type="entry name" value="Proteasome_sua/b"/>
</dbReference>
<dbReference type="InterPro" id="IPR023333">
    <property type="entry name" value="Proteasome_suB-type"/>
</dbReference>
<dbReference type="NCBIfam" id="TIGR03692">
    <property type="entry name" value="ATP_dep_HslV"/>
    <property type="match status" value="1"/>
</dbReference>
<dbReference type="NCBIfam" id="NF003964">
    <property type="entry name" value="PRK05456.1"/>
    <property type="match status" value="1"/>
</dbReference>
<dbReference type="PANTHER" id="PTHR32194:SF0">
    <property type="entry name" value="ATP-DEPENDENT PROTEASE SUBUNIT HSLV"/>
    <property type="match status" value="1"/>
</dbReference>
<dbReference type="PANTHER" id="PTHR32194">
    <property type="entry name" value="METALLOPROTEASE TLDD"/>
    <property type="match status" value="1"/>
</dbReference>
<dbReference type="Pfam" id="PF00227">
    <property type="entry name" value="Proteasome"/>
    <property type="match status" value="1"/>
</dbReference>
<dbReference type="PIRSF" id="PIRSF039093">
    <property type="entry name" value="HslV"/>
    <property type="match status" value="1"/>
</dbReference>
<dbReference type="SUPFAM" id="SSF56235">
    <property type="entry name" value="N-terminal nucleophile aminohydrolases (Ntn hydrolases)"/>
    <property type="match status" value="1"/>
</dbReference>
<dbReference type="PROSITE" id="PS51476">
    <property type="entry name" value="PROTEASOME_BETA_2"/>
    <property type="match status" value="1"/>
</dbReference>
<feature type="chain" id="PRO_1000012669" description="ATP-dependent protease subunit HslV">
    <location>
        <begin position="1"/>
        <end position="174"/>
    </location>
</feature>
<feature type="active site" evidence="1">
    <location>
        <position position="2"/>
    </location>
</feature>
<feature type="binding site" evidence="1">
    <location>
        <position position="157"/>
    </location>
    <ligand>
        <name>Na(+)</name>
        <dbReference type="ChEBI" id="CHEBI:29101"/>
    </ligand>
</feature>
<feature type="binding site" evidence="1">
    <location>
        <position position="160"/>
    </location>
    <ligand>
        <name>Na(+)</name>
        <dbReference type="ChEBI" id="CHEBI:29101"/>
    </ligand>
</feature>
<feature type="binding site" evidence="1">
    <location>
        <position position="163"/>
    </location>
    <ligand>
        <name>Na(+)</name>
        <dbReference type="ChEBI" id="CHEBI:29101"/>
    </ligand>
</feature>
<comment type="function">
    <text evidence="1">Protease subunit of a proteasome-like degradation complex believed to be a general protein degrading machinery.</text>
</comment>
<comment type="catalytic activity">
    <reaction evidence="1">
        <text>ATP-dependent cleavage of peptide bonds with broad specificity.</text>
        <dbReference type="EC" id="3.4.25.2"/>
    </reaction>
</comment>
<comment type="activity regulation">
    <text evidence="1">Allosterically activated by HslU binding.</text>
</comment>
<comment type="subunit">
    <text evidence="1">A double ring-shaped homohexamer of HslV is capped on each side by a ring-shaped HslU homohexamer. The assembly of the HslU/HslV complex is dependent on binding of ATP.</text>
</comment>
<comment type="subcellular location">
    <subcellularLocation>
        <location evidence="1">Cytoplasm</location>
    </subcellularLocation>
</comment>
<comment type="similarity">
    <text evidence="1">Belongs to the peptidase T1B family. HslV subfamily.</text>
</comment>
<gene>
    <name evidence="1" type="primary">hslV</name>
    <name type="ordered locus">Shew_0375</name>
</gene>
<organism>
    <name type="scientific">Shewanella loihica (strain ATCC BAA-1088 / PV-4)</name>
    <dbReference type="NCBI Taxonomy" id="323850"/>
    <lineage>
        <taxon>Bacteria</taxon>
        <taxon>Pseudomonadati</taxon>
        <taxon>Pseudomonadota</taxon>
        <taxon>Gammaproteobacteria</taxon>
        <taxon>Alteromonadales</taxon>
        <taxon>Shewanellaceae</taxon>
        <taxon>Shewanella</taxon>
    </lineage>
</organism>
<protein>
    <recommendedName>
        <fullName evidence="1">ATP-dependent protease subunit HslV</fullName>
        <ecNumber evidence="1">3.4.25.2</ecNumber>
    </recommendedName>
</protein>
<reference key="1">
    <citation type="submission" date="2007-03" db="EMBL/GenBank/DDBJ databases">
        <title>Complete sequence of Shewanella loihica PV-4.</title>
        <authorList>
            <consortium name="US DOE Joint Genome Institute"/>
            <person name="Copeland A."/>
            <person name="Lucas S."/>
            <person name="Lapidus A."/>
            <person name="Barry K."/>
            <person name="Detter J.C."/>
            <person name="Glavina del Rio T."/>
            <person name="Hammon N."/>
            <person name="Israni S."/>
            <person name="Dalin E."/>
            <person name="Tice H."/>
            <person name="Pitluck S."/>
            <person name="Chain P."/>
            <person name="Malfatti S."/>
            <person name="Shin M."/>
            <person name="Vergez L."/>
            <person name="Schmutz J."/>
            <person name="Larimer F."/>
            <person name="Land M."/>
            <person name="Hauser L."/>
            <person name="Kyrpides N."/>
            <person name="Mikhailova N."/>
            <person name="Romine M.F."/>
            <person name="Serres G."/>
            <person name="Fredrickson J."/>
            <person name="Tiedje J."/>
            <person name="Richardson P."/>
        </authorList>
    </citation>
    <scope>NUCLEOTIDE SEQUENCE [LARGE SCALE GENOMIC DNA]</scope>
    <source>
        <strain>ATCC BAA-1088 / PV-4</strain>
    </source>
</reference>
<accession>A3Q9U9</accession>
<name>HSLV_SHELP</name>